<proteinExistence type="inferred from homology"/>
<name>COPB_ECO57</name>
<comment type="function">
    <text evidence="1">This protein is involved in the determination of copy number in gene replication. It binds to the repA promoter thus inhibiting the synthesis of the mRNA for the initiator protein repA (By similarity).</text>
</comment>
<sequence length="84" mass="9406">MSQTENAVTSSSGAKRAYRKGNPLSDAEKQRLSVARKRASFKEVKVFLEPKYKAMLMQMCHEDGLTQAEVLTALIKSEAQKRCV</sequence>
<evidence type="ECO:0000250" key="1"/>
<evidence type="ECO:0000256" key="2">
    <source>
        <dbReference type="SAM" id="MobiDB-lite"/>
    </source>
</evidence>
<keyword id="KW-0238">DNA-binding</keyword>
<keyword id="KW-0614">Plasmid</keyword>
<keyword id="KW-0615">Plasmid copy control</keyword>
<keyword id="KW-1185">Reference proteome</keyword>
<keyword id="KW-0678">Repressor</keyword>
<keyword id="KW-0804">Transcription</keyword>
<keyword id="KW-0805">Transcription regulation</keyword>
<organism>
    <name type="scientific">Escherichia coli O157:H7</name>
    <dbReference type="NCBI Taxonomy" id="83334"/>
    <lineage>
        <taxon>Bacteria</taxon>
        <taxon>Pseudomonadati</taxon>
        <taxon>Pseudomonadota</taxon>
        <taxon>Gammaproteobacteria</taxon>
        <taxon>Enterobacterales</taxon>
        <taxon>Enterobacteriaceae</taxon>
        <taxon>Escherichia</taxon>
    </lineage>
</organism>
<reference key="1">
    <citation type="journal article" date="1998" name="Nucleic Acids Res.">
        <title>The complete DNA sequence and analysis of the large virulence plasmid of Escherichia coli O157:H7.</title>
        <authorList>
            <person name="Burland V."/>
            <person name="Shao Y."/>
            <person name="Perna N.T."/>
            <person name="Plunkett G. III"/>
            <person name="Sofia H.J."/>
            <person name="Blattner F.R."/>
        </authorList>
    </citation>
    <scope>NUCLEOTIDE SEQUENCE [LARGE SCALE GENOMIC DNA]</scope>
    <source>
        <strain>O157:H7 / EDL933 / ATCC 700927 / EHEC</strain>
    </source>
</reference>
<reference key="2">
    <citation type="journal article" date="1998" name="DNA Res.">
        <title>Complete nucleotide sequences of 93-kb and 3.3-kb plasmids of an enterohemorrhagic Escherichia coli O157:H7 derived from Sakai outbreak.</title>
        <authorList>
            <person name="Makino K."/>
            <person name="Ishii K."/>
            <person name="Yasunaga T."/>
            <person name="Hattori M."/>
            <person name="Yokoyama K."/>
            <person name="Yatsudo H.C."/>
            <person name="Kubota Y."/>
            <person name="Yamaichi Y."/>
            <person name="Iida T."/>
            <person name="Yamamoto K."/>
            <person name="Honda T."/>
            <person name="Han C.G."/>
            <person name="Ohtsubo A."/>
            <person name="Kasamatsu M."/>
            <person name="Hayashi T."/>
            <person name="Kuhara S."/>
            <person name="Shinagawa H."/>
        </authorList>
    </citation>
    <scope>NUCLEOTIDE SEQUENCE [LARGE SCALE GENOMIC DNA]</scope>
    <source>
        <strain>O157:H7 / Sakai / RIMD 0509952 / EHEC</strain>
    </source>
</reference>
<protein>
    <recommendedName>
        <fullName>Replication regulatory protein repA2</fullName>
    </recommendedName>
    <alternativeName>
        <fullName>Protein CopB</fullName>
    </alternativeName>
</protein>
<accession>Q7BSX2</accession>
<accession>O82925</accession>
<geneLocation type="plasmid">
    <name>pO157</name>
</geneLocation>
<feature type="chain" id="PRO_0000068293" description="Replication regulatory protein repA2">
    <location>
        <begin position="1"/>
        <end position="84"/>
    </location>
</feature>
<feature type="region of interest" description="Disordered" evidence="2">
    <location>
        <begin position="1"/>
        <end position="31"/>
    </location>
</feature>
<feature type="compositionally biased region" description="Polar residues" evidence="2">
    <location>
        <begin position="1"/>
        <end position="13"/>
    </location>
</feature>
<gene>
    <name type="primary">repA2</name>
    <name type="synonym">copB</name>
    <name type="ordered locus">L7006</name>
    <name type="ordered locus">ECO57PM67</name>
</gene>
<dbReference type="EMBL" id="AF074613">
    <property type="protein sequence ID" value="AAC70074.1"/>
    <property type="molecule type" value="Genomic_DNA"/>
</dbReference>
<dbReference type="EMBL" id="AB011549">
    <property type="protein sequence ID" value="BAA31824.1"/>
    <property type="molecule type" value="Genomic_DNA"/>
</dbReference>
<dbReference type="PIR" id="T00305">
    <property type="entry name" value="T00305"/>
</dbReference>
<dbReference type="RefSeq" id="NP_052674.1">
    <property type="nucleotide sequence ID" value="NC_002128.1"/>
</dbReference>
<dbReference type="RefSeq" id="WP_000083831.1">
    <property type="nucleotide sequence ID" value="NZ_VOAI01000049.1"/>
</dbReference>
<dbReference type="SMR" id="Q7BSX2"/>
<dbReference type="GeneID" id="1789682"/>
<dbReference type="KEGG" id="ece:Z_L7006"/>
<dbReference type="KEGG" id="ecs:pO157p67"/>
<dbReference type="PATRIC" id="fig|386585.9.peg.78"/>
<dbReference type="eggNOG" id="ENOG50334KG">
    <property type="taxonomic scope" value="Bacteria"/>
</dbReference>
<dbReference type="HOGENOM" id="CLU_180887_0_0_6"/>
<dbReference type="OMA" id="QLQEMCE"/>
<dbReference type="Proteomes" id="UP000000558">
    <property type="component" value="Plasmid pO157"/>
</dbReference>
<dbReference type="Proteomes" id="UP000002519">
    <property type="component" value="Plasmid pO157"/>
</dbReference>
<dbReference type="GO" id="GO:0003677">
    <property type="term" value="F:DNA binding"/>
    <property type="evidence" value="ECO:0007669"/>
    <property type="project" value="UniProtKB-KW"/>
</dbReference>
<dbReference type="GO" id="GO:0006276">
    <property type="term" value="P:plasmid maintenance"/>
    <property type="evidence" value="ECO:0007669"/>
    <property type="project" value="UniProtKB-KW"/>
</dbReference>
<dbReference type="InterPro" id="IPR019661">
    <property type="entry name" value="RepA2"/>
</dbReference>
<dbReference type="NCBIfam" id="NF010256">
    <property type="entry name" value="PRK13702.1"/>
    <property type="match status" value="1"/>
</dbReference>
<dbReference type="Pfam" id="PF10723">
    <property type="entry name" value="RepB-RCR_reg"/>
    <property type="match status" value="1"/>
</dbReference>